<keyword id="KW-0963">Cytoplasm</keyword>
<keyword id="KW-0312">Gluconeogenesis</keyword>
<keyword id="KW-0324">Glycolysis</keyword>
<keyword id="KW-0413">Isomerase</keyword>
<keyword id="KW-1185">Reference proteome</keyword>
<dbReference type="EC" id="5.3.1.9" evidence="1"/>
<dbReference type="EMBL" id="CP000492">
    <property type="protein sequence ID" value="ABL65136.1"/>
    <property type="molecule type" value="Genomic_DNA"/>
</dbReference>
<dbReference type="RefSeq" id="WP_011744962.1">
    <property type="nucleotide sequence ID" value="NC_008639.1"/>
</dbReference>
<dbReference type="SMR" id="A1BFF9"/>
<dbReference type="STRING" id="290317.Cpha266_1095"/>
<dbReference type="KEGG" id="cph:Cpha266_1095"/>
<dbReference type="eggNOG" id="COG0166">
    <property type="taxonomic scope" value="Bacteria"/>
</dbReference>
<dbReference type="HOGENOM" id="CLU_017947_3_1_10"/>
<dbReference type="OrthoDB" id="140919at2"/>
<dbReference type="UniPathway" id="UPA00109">
    <property type="reaction ID" value="UER00181"/>
</dbReference>
<dbReference type="UniPathway" id="UPA00138"/>
<dbReference type="Proteomes" id="UP000008701">
    <property type="component" value="Chromosome"/>
</dbReference>
<dbReference type="GO" id="GO:0005829">
    <property type="term" value="C:cytosol"/>
    <property type="evidence" value="ECO:0007669"/>
    <property type="project" value="TreeGrafter"/>
</dbReference>
<dbReference type="GO" id="GO:0097367">
    <property type="term" value="F:carbohydrate derivative binding"/>
    <property type="evidence" value="ECO:0007669"/>
    <property type="project" value="InterPro"/>
</dbReference>
<dbReference type="GO" id="GO:0004347">
    <property type="term" value="F:glucose-6-phosphate isomerase activity"/>
    <property type="evidence" value="ECO:0007669"/>
    <property type="project" value="UniProtKB-UniRule"/>
</dbReference>
<dbReference type="GO" id="GO:0048029">
    <property type="term" value="F:monosaccharide binding"/>
    <property type="evidence" value="ECO:0007669"/>
    <property type="project" value="TreeGrafter"/>
</dbReference>
<dbReference type="GO" id="GO:0006094">
    <property type="term" value="P:gluconeogenesis"/>
    <property type="evidence" value="ECO:0007669"/>
    <property type="project" value="UniProtKB-UniRule"/>
</dbReference>
<dbReference type="GO" id="GO:0051156">
    <property type="term" value="P:glucose 6-phosphate metabolic process"/>
    <property type="evidence" value="ECO:0007669"/>
    <property type="project" value="TreeGrafter"/>
</dbReference>
<dbReference type="GO" id="GO:0006096">
    <property type="term" value="P:glycolytic process"/>
    <property type="evidence" value="ECO:0007669"/>
    <property type="project" value="UniProtKB-UniRule"/>
</dbReference>
<dbReference type="CDD" id="cd05015">
    <property type="entry name" value="SIS_PGI_1"/>
    <property type="match status" value="1"/>
</dbReference>
<dbReference type="CDD" id="cd05016">
    <property type="entry name" value="SIS_PGI_2"/>
    <property type="match status" value="1"/>
</dbReference>
<dbReference type="FunFam" id="1.10.1390.10:FF:000001">
    <property type="entry name" value="Glucose-6-phosphate isomerase"/>
    <property type="match status" value="1"/>
</dbReference>
<dbReference type="FunFam" id="3.40.50.10490:FF:000004">
    <property type="entry name" value="Glucose-6-phosphate isomerase"/>
    <property type="match status" value="1"/>
</dbReference>
<dbReference type="Gene3D" id="1.10.1390.10">
    <property type="match status" value="1"/>
</dbReference>
<dbReference type="Gene3D" id="3.40.50.10490">
    <property type="entry name" value="Glucose-6-phosphate isomerase like protein, domain 1"/>
    <property type="match status" value="2"/>
</dbReference>
<dbReference type="HAMAP" id="MF_00473">
    <property type="entry name" value="G6P_isomerase"/>
    <property type="match status" value="1"/>
</dbReference>
<dbReference type="InterPro" id="IPR001672">
    <property type="entry name" value="G6P_Isomerase"/>
</dbReference>
<dbReference type="InterPro" id="IPR023096">
    <property type="entry name" value="G6P_Isomerase_C"/>
</dbReference>
<dbReference type="InterPro" id="IPR018189">
    <property type="entry name" value="Phosphoglucose_isomerase_CS"/>
</dbReference>
<dbReference type="InterPro" id="IPR046348">
    <property type="entry name" value="SIS_dom_sf"/>
</dbReference>
<dbReference type="InterPro" id="IPR035476">
    <property type="entry name" value="SIS_PGI_1"/>
</dbReference>
<dbReference type="InterPro" id="IPR035482">
    <property type="entry name" value="SIS_PGI_2"/>
</dbReference>
<dbReference type="NCBIfam" id="NF001211">
    <property type="entry name" value="PRK00179.1"/>
    <property type="match status" value="1"/>
</dbReference>
<dbReference type="PANTHER" id="PTHR11469">
    <property type="entry name" value="GLUCOSE-6-PHOSPHATE ISOMERASE"/>
    <property type="match status" value="1"/>
</dbReference>
<dbReference type="PANTHER" id="PTHR11469:SF1">
    <property type="entry name" value="GLUCOSE-6-PHOSPHATE ISOMERASE"/>
    <property type="match status" value="1"/>
</dbReference>
<dbReference type="Pfam" id="PF00342">
    <property type="entry name" value="PGI"/>
    <property type="match status" value="1"/>
</dbReference>
<dbReference type="PRINTS" id="PR00662">
    <property type="entry name" value="G6PISOMERASE"/>
</dbReference>
<dbReference type="SUPFAM" id="SSF53697">
    <property type="entry name" value="SIS domain"/>
    <property type="match status" value="1"/>
</dbReference>
<dbReference type="PROSITE" id="PS00765">
    <property type="entry name" value="P_GLUCOSE_ISOMERASE_1"/>
    <property type="match status" value="1"/>
</dbReference>
<dbReference type="PROSITE" id="PS00174">
    <property type="entry name" value="P_GLUCOSE_ISOMERASE_2"/>
    <property type="match status" value="1"/>
</dbReference>
<dbReference type="PROSITE" id="PS51463">
    <property type="entry name" value="P_GLUCOSE_ISOMERASE_3"/>
    <property type="match status" value="1"/>
</dbReference>
<organism>
    <name type="scientific">Chlorobium phaeobacteroides (strain DSM 266 / SMG 266 / 2430)</name>
    <dbReference type="NCBI Taxonomy" id="290317"/>
    <lineage>
        <taxon>Bacteria</taxon>
        <taxon>Pseudomonadati</taxon>
        <taxon>Chlorobiota</taxon>
        <taxon>Chlorobiia</taxon>
        <taxon>Chlorobiales</taxon>
        <taxon>Chlorobiaceae</taxon>
        <taxon>Chlorobium/Pelodictyon group</taxon>
        <taxon>Chlorobium</taxon>
    </lineage>
</organism>
<proteinExistence type="inferred from homology"/>
<gene>
    <name evidence="1" type="primary">pgi</name>
    <name type="ordered locus">Cpha266_1095</name>
</gene>
<accession>A1BFF9</accession>
<name>G6PI_CHLPD</name>
<evidence type="ECO:0000255" key="1">
    <source>
        <dbReference type="HAMAP-Rule" id="MF_00473"/>
    </source>
</evidence>
<comment type="function">
    <text evidence="1">Catalyzes the reversible isomerization of glucose-6-phosphate to fructose-6-phosphate.</text>
</comment>
<comment type="catalytic activity">
    <reaction evidence="1">
        <text>alpha-D-glucose 6-phosphate = beta-D-fructose 6-phosphate</text>
        <dbReference type="Rhea" id="RHEA:11816"/>
        <dbReference type="ChEBI" id="CHEBI:57634"/>
        <dbReference type="ChEBI" id="CHEBI:58225"/>
        <dbReference type="EC" id="5.3.1.9"/>
    </reaction>
</comment>
<comment type="pathway">
    <text evidence="1">Carbohydrate biosynthesis; gluconeogenesis.</text>
</comment>
<comment type="pathway">
    <text evidence="1">Carbohydrate degradation; glycolysis; D-glyceraldehyde 3-phosphate and glycerone phosphate from D-glucose: step 2/4.</text>
</comment>
<comment type="subcellular location">
    <subcellularLocation>
        <location evidence="1">Cytoplasm</location>
    </subcellularLocation>
</comment>
<comment type="similarity">
    <text evidence="1">Belongs to the GPI family.</text>
</comment>
<protein>
    <recommendedName>
        <fullName evidence="1">Glucose-6-phosphate isomerase</fullName>
        <shortName evidence="1">GPI</shortName>
        <ecNumber evidence="1">5.3.1.9</ecNumber>
    </recommendedName>
    <alternativeName>
        <fullName evidence="1">Phosphoglucose isomerase</fullName>
        <shortName evidence="1">PGI</shortName>
    </alternativeName>
    <alternativeName>
        <fullName evidence="1">Phosphohexose isomerase</fullName>
        <shortName evidence="1">PHI</shortName>
    </alternativeName>
</protein>
<feature type="chain" id="PRO_1000013951" description="Glucose-6-phosphate isomerase">
    <location>
        <begin position="1"/>
        <end position="559"/>
    </location>
</feature>
<feature type="active site" description="Proton donor" evidence="1">
    <location>
        <position position="352"/>
    </location>
</feature>
<feature type="active site" evidence="1">
    <location>
        <position position="383"/>
    </location>
</feature>
<feature type="active site" evidence="1">
    <location>
        <position position="511"/>
    </location>
</feature>
<sequence length="559" mass="63299">MELSRSAAWSALVFHKHEVDKKTMRDMFAGDSDRFVKFSLSWKEMLLDYSKNRITSRTMELLLELAHSAGVDEKRQQMFQGAPINFTENRSVLHTALRRPPGYVLEVDGLNIGDEIAGVLFQMKNFCEKVISGKWKGYTGKSITDVVNIGIGGSDLGPYMVTEALKPFAHGGLDVHFVSNIDGTHIRETLKRLDPETTLFIIASKTFTTQETLTNAMSAREWFLARAVEEEYIKKHFAAVSTNQEKVVEFGIDDANMFRFWDWVGGRYSLWSSIGLSIALYLGFNRFEELLAGAHAMDEHFLNEPFNRNIPVILALLGIWYRNFFDAASHAVIPYDQYLHRFPAYLQQLDMESNGKRVDENGHTVTHATGPVIWGEPGTNAQHAFFQLLHQGPDLIPADFIVPLKSQNPSGEHHDMLLANCFAQTEALMKGKTEQEVRAELSDAGYDEADIQKLFQHKVFSGNRPTNTILVHELNPFMLGSLIAMYEHKVFVQGVIWRINSFDQWGVELGKQLARTILPEIQSAEAVTAHDASTNALINMARTFREENIRKESAQLSFF</sequence>
<reference key="1">
    <citation type="submission" date="2006-12" db="EMBL/GenBank/DDBJ databases">
        <title>Complete sequence of Chlorobium phaeobacteroides DSM 266.</title>
        <authorList>
            <consortium name="US DOE Joint Genome Institute"/>
            <person name="Copeland A."/>
            <person name="Lucas S."/>
            <person name="Lapidus A."/>
            <person name="Barry K."/>
            <person name="Detter J.C."/>
            <person name="Glavina del Rio T."/>
            <person name="Hammon N."/>
            <person name="Israni S."/>
            <person name="Pitluck S."/>
            <person name="Goltsman E."/>
            <person name="Schmutz J."/>
            <person name="Larimer F."/>
            <person name="Land M."/>
            <person name="Hauser L."/>
            <person name="Mikhailova N."/>
            <person name="Li T."/>
            <person name="Overmann J."/>
            <person name="Bryant D.A."/>
            <person name="Richardson P."/>
        </authorList>
    </citation>
    <scope>NUCLEOTIDE SEQUENCE [LARGE SCALE GENOMIC DNA]</scope>
    <source>
        <strain>DSM 266 / SMG 266 / 2430</strain>
    </source>
</reference>